<sequence length="713" mass="77225">MTATLDVPEQNPDLVLDQSADDYWNHYQLTFALYSVSDRAIPSAYDGLKPGQRRLLYQMHDSKLLPGNKPQKSSKVCSAVTGNLHPHGGASMYGAAALMAADFQRVKVIDGQGAFPRIQGDIPAADRYTEMRLSAPGAALTAELNDHAVPMVPTFDGEWVEPTVLPAQWPVLLCNGAVGIAEGWATKVPAHNPREVMAACRALLKTPNMTDDRLCKLIPGPDWGSGASVVGTAGLREYITTGRGHFTVRGTISVEGKNCIITELPPGVASNTVQDRIRALVESGEMSGVADMSDLTDRRNGLRIVVTAKRGHNAEQIRDQLLALTPLESTFAASLVALDENRVPRWWSVRDLIMAFLQLRDSVVLHRSEYRLEKVTARRHLVAGLMKIHLDIDAAVAVIRGSETVDEARKGLQERFKIDAEQADYVLSLQLRRLTKLDVIELQAEAEKLDAEFAELNDLVTNPESRRKVIDKELVETAKLFKGPEYDRRTVLDFDATPVSRGDEDGSRERKVNTAWRLDDRGVFSDSHGELLTSGLGWAVWSDGRIKFTTGNGLPFKIRDIPVAPDITGLVRSGVLPEGYHLALVTRRGKILRVDPASVNPQGVAGNGVAGVKLAADGDEVIAALPVSCANGEAILSIAEKSWKVTEVADIPVKGRGGAGVAFHPFVKGEDALLAASISKTGYVRGKRAVRPENRAKASIKGSGADVTPAPAE</sequence>
<comment type="function">
    <text evidence="3">Catalyzes the relaxation of negatively supercoiled DNA in the presence of ATP or dATP but not other nucleotides. Individual subunits have no activity. Not able to negatively supercoil DNA, it can however introduce positive supercoils in DNA. Relaxes positive supercoils in an ATP-dependent manner. Catenates and decatenates DNA. Generates dsDNA breaks in the presence of the quinolone antibiotic ciprofloxacin, showing it is a topoisomerase (PubMed:16313624).</text>
</comment>
<comment type="catalytic activity">
    <reaction evidence="3">
        <text>ATP-dependent breakage, passage and rejoining of double-stranded DNA.</text>
        <dbReference type="EC" id="5.6.2.2"/>
    </reaction>
</comment>
<comment type="cofactor">
    <cofactor evidence="3">
        <name>Mg(2+)</name>
        <dbReference type="ChEBI" id="CHEBI:18420"/>
    </cofactor>
    <text evidence="3">Maximal DNA relaxation at 5.0 mM MgCl(2) (PubMed:16313624).</text>
</comment>
<comment type="activity regulation">
    <text evidence="3">Inhibited by quinolone antibiotic ciprofloxacin and coumarin antibiotic novobiocin, but at much higher concentrations than is usual for DNA gyrase/topoisomerase (PubMed:16313624).</text>
</comment>
<comment type="subunit">
    <text evidence="3">A complex of TopoN and TopoM, possibly a heterotetramer (PubMed:16313624).</text>
</comment>
<comment type="similarity">
    <text evidence="5">Belongs to the type II topoisomerase GyrA/ParC subunit family.</text>
</comment>
<evidence type="ECO:0000255" key="1">
    <source>
        <dbReference type="PROSITE-ProRule" id="PRU01384"/>
    </source>
</evidence>
<evidence type="ECO:0000256" key="2">
    <source>
        <dbReference type="SAM" id="MobiDB-lite"/>
    </source>
</evidence>
<evidence type="ECO:0000269" key="3">
    <source>
    </source>
</evidence>
<evidence type="ECO:0000303" key="4">
    <source>
    </source>
</evidence>
<evidence type="ECO:0000305" key="5"/>
<gene>
    <name evidence="4" type="primary">topoM</name>
    <name type="ordered locus">MSMEG_0456</name>
    <name type="ordered locus">MSMEI_0443</name>
</gene>
<proteinExistence type="evidence at protein level"/>
<feature type="chain" id="PRO_0000434909" description="Topoisomerase subunit TopoM">
    <location>
        <begin position="1"/>
        <end position="713"/>
    </location>
</feature>
<feature type="domain" description="Topo IIA-type catalytic" evidence="1">
    <location>
        <begin position="41"/>
        <end position="504"/>
    </location>
</feature>
<feature type="region of interest" description="Disordered" evidence="2">
    <location>
        <begin position="694"/>
        <end position="713"/>
    </location>
</feature>
<feature type="active site" description="O-(5'-phospho-DNA)-tyrosine intermediate" evidence="1">
    <location>
        <position position="128"/>
    </location>
</feature>
<dbReference type="EC" id="5.6.2.2" evidence="3"/>
<dbReference type="EMBL" id="CP000480">
    <property type="protein sequence ID" value="ABK76234.1"/>
    <property type="molecule type" value="Genomic_DNA"/>
</dbReference>
<dbReference type="EMBL" id="CP001663">
    <property type="protein sequence ID" value="AFP36924.1"/>
    <property type="molecule type" value="Genomic_DNA"/>
</dbReference>
<dbReference type="RefSeq" id="WP_003891777.1">
    <property type="nucleotide sequence ID" value="NZ_SIJM01000025.1"/>
</dbReference>
<dbReference type="RefSeq" id="YP_884869.1">
    <property type="nucleotide sequence ID" value="NC_008596.1"/>
</dbReference>
<dbReference type="SMR" id="A0QPN1"/>
<dbReference type="STRING" id="246196.MSMEG_0456"/>
<dbReference type="PaxDb" id="246196-MSMEI_0443"/>
<dbReference type="KEGG" id="msb:LJ00_02260"/>
<dbReference type="KEGG" id="msg:MSMEI_0443"/>
<dbReference type="KEGG" id="msm:MSMEG_0456"/>
<dbReference type="PATRIC" id="fig|246196.19.peg.451"/>
<dbReference type="eggNOG" id="COG0188">
    <property type="taxonomic scope" value="Bacteria"/>
</dbReference>
<dbReference type="OrthoDB" id="9806486at2"/>
<dbReference type="Proteomes" id="UP000000757">
    <property type="component" value="Chromosome"/>
</dbReference>
<dbReference type="Proteomes" id="UP000006158">
    <property type="component" value="Chromosome"/>
</dbReference>
<dbReference type="GO" id="GO:0005737">
    <property type="term" value="C:cytoplasm"/>
    <property type="evidence" value="ECO:0007669"/>
    <property type="project" value="TreeGrafter"/>
</dbReference>
<dbReference type="GO" id="GO:0009330">
    <property type="term" value="C:DNA topoisomerase type II (double strand cut, ATP-hydrolyzing) complex"/>
    <property type="evidence" value="ECO:0007669"/>
    <property type="project" value="TreeGrafter"/>
</dbReference>
<dbReference type="GO" id="GO:0005524">
    <property type="term" value="F:ATP binding"/>
    <property type="evidence" value="ECO:0007669"/>
    <property type="project" value="InterPro"/>
</dbReference>
<dbReference type="GO" id="GO:0003677">
    <property type="term" value="F:DNA binding"/>
    <property type="evidence" value="ECO:0007669"/>
    <property type="project" value="UniProtKB-KW"/>
</dbReference>
<dbReference type="GO" id="GO:0034335">
    <property type="term" value="F:DNA negative supercoiling activity"/>
    <property type="evidence" value="ECO:0007669"/>
    <property type="project" value="UniProtKB-ARBA"/>
</dbReference>
<dbReference type="GO" id="GO:0006265">
    <property type="term" value="P:DNA topological change"/>
    <property type="evidence" value="ECO:0007669"/>
    <property type="project" value="InterPro"/>
</dbReference>
<dbReference type="CDD" id="cd00187">
    <property type="entry name" value="TOP4c"/>
    <property type="match status" value="1"/>
</dbReference>
<dbReference type="Gene3D" id="3.30.1360.40">
    <property type="match status" value="1"/>
</dbReference>
<dbReference type="Gene3D" id="2.120.10.90">
    <property type="entry name" value="DNA gyrase/topoisomerase IV, subunit A, C-terminal"/>
    <property type="match status" value="1"/>
</dbReference>
<dbReference type="Gene3D" id="3.90.199.10">
    <property type="entry name" value="Topoisomerase II, domain 5"/>
    <property type="match status" value="1"/>
</dbReference>
<dbReference type="Gene3D" id="1.10.268.10">
    <property type="entry name" value="Topoisomerase, domain 3"/>
    <property type="match status" value="1"/>
</dbReference>
<dbReference type="InterPro" id="IPR006691">
    <property type="entry name" value="GyrA/parC_rep"/>
</dbReference>
<dbReference type="InterPro" id="IPR035516">
    <property type="entry name" value="Gyrase/topoIV_suA_C"/>
</dbReference>
<dbReference type="InterPro" id="IPR013760">
    <property type="entry name" value="Topo_IIA-like_dom_sf"/>
</dbReference>
<dbReference type="InterPro" id="IPR013758">
    <property type="entry name" value="Topo_IIA_A/C_ab"/>
</dbReference>
<dbReference type="InterPro" id="IPR013757">
    <property type="entry name" value="Topo_IIA_A_a_sf"/>
</dbReference>
<dbReference type="InterPro" id="IPR002205">
    <property type="entry name" value="Topo_IIA_dom_A"/>
</dbReference>
<dbReference type="InterPro" id="IPR050220">
    <property type="entry name" value="Type_II_DNA_Topoisomerases"/>
</dbReference>
<dbReference type="PANTHER" id="PTHR43493:SF5">
    <property type="entry name" value="DNA GYRASE SUBUNIT A, CHLOROPLASTIC_MITOCHONDRIAL"/>
    <property type="match status" value="1"/>
</dbReference>
<dbReference type="PANTHER" id="PTHR43493">
    <property type="entry name" value="DNA GYRASE/TOPOISOMERASE SUBUNIT A"/>
    <property type="match status" value="1"/>
</dbReference>
<dbReference type="Pfam" id="PF03989">
    <property type="entry name" value="DNA_gyraseA_C"/>
    <property type="match status" value="2"/>
</dbReference>
<dbReference type="Pfam" id="PF00521">
    <property type="entry name" value="DNA_topoisoIV"/>
    <property type="match status" value="1"/>
</dbReference>
<dbReference type="SMART" id="SM00434">
    <property type="entry name" value="TOP4c"/>
    <property type="match status" value="1"/>
</dbReference>
<dbReference type="SUPFAM" id="SSF101904">
    <property type="entry name" value="GyrA/ParC C-terminal domain-like"/>
    <property type="match status" value="1"/>
</dbReference>
<dbReference type="SUPFAM" id="SSF56719">
    <property type="entry name" value="Type II DNA topoisomerase"/>
    <property type="match status" value="1"/>
</dbReference>
<dbReference type="PROSITE" id="PS52040">
    <property type="entry name" value="TOPO_IIA"/>
    <property type="match status" value="1"/>
</dbReference>
<accession>A0QPN1</accession>
<organism>
    <name type="scientific">Mycolicibacterium smegmatis (strain ATCC 700084 / mc(2)155)</name>
    <name type="common">Mycobacterium smegmatis</name>
    <dbReference type="NCBI Taxonomy" id="246196"/>
    <lineage>
        <taxon>Bacteria</taxon>
        <taxon>Bacillati</taxon>
        <taxon>Actinomycetota</taxon>
        <taxon>Actinomycetes</taxon>
        <taxon>Mycobacteriales</taxon>
        <taxon>Mycobacteriaceae</taxon>
        <taxon>Mycolicibacterium</taxon>
    </lineage>
</organism>
<protein>
    <recommendedName>
        <fullName evidence="4">Topoisomerase subunit TopoM</fullName>
        <ecNumber evidence="3">5.6.2.2</ecNumber>
    </recommendedName>
</protein>
<keyword id="KW-0238">DNA-binding</keyword>
<keyword id="KW-0413">Isomerase</keyword>
<keyword id="KW-1185">Reference proteome</keyword>
<keyword id="KW-0799">Topoisomerase</keyword>
<name>TOPOM_MYCS2</name>
<reference key="1">
    <citation type="submission" date="2006-10" db="EMBL/GenBank/DDBJ databases">
        <authorList>
            <person name="Fleischmann R.D."/>
            <person name="Dodson R.J."/>
            <person name="Haft D.H."/>
            <person name="Merkel J.S."/>
            <person name="Nelson W.C."/>
            <person name="Fraser C.M."/>
        </authorList>
    </citation>
    <scope>NUCLEOTIDE SEQUENCE [LARGE SCALE GENOMIC DNA]</scope>
    <source>
        <strain>ATCC 700084 / mc(2)155</strain>
    </source>
</reference>
<reference key="2">
    <citation type="journal article" date="2007" name="Genome Biol.">
        <title>Interrupted coding sequences in Mycobacterium smegmatis: authentic mutations or sequencing errors?</title>
        <authorList>
            <person name="Deshayes C."/>
            <person name="Perrodou E."/>
            <person name="Gallien S."/>
            <person name="Euphrasie D."/>
            <person name="Schaeffer C."/>
            <person name="Van-Dorsselaer A."/>
            <person name="Poch O."/>
            <person name="Lecompte O."/>
            <person name="Reyrat J.-M."/>
        </authorList>
    </citation>
    <scope>NUCLEOTIDE SEQUENCE [LARGE SCALE GENOMIC DNA]</scope>
    <source>
        <strain>ATCC 700084 / mc(2)155</strain>
    </source>
</reference>
<reference key="3">
    <citation type="journal article" date="2009" name="Genome Res.">
        <title>Ortho-proteogenomics: multiple proteomes investigation through orthology and a new MS-based protocol.</title>
        <authorList>
            <person name="Gallien S."/>
            <person name="Perrodou E."/>
            <person name="Carapito C."/>
            <person name="Deshayes C."/>
            <person name="Reyrat J.-M."/>
            <person name="Van Dorsselaer A."/>
            <person name="Poch O."/>
            <person name="Schaeffer C."/>
            <person name="Lecompte O."/>
        </authorList>
    </citation>
    <scope>NUCLEOTIDE SEQUENCE [LARGE SCALE GENOMIC DNA]</scope>
    <source>
        <strain>ATCC 700084 / mc(2)155</strain>
    </source>
</reference>
<reference key="4">
    <citation type="journal article" date="2005" name="Mol. Microbiol.">
        <title>An atypical type II topoisomerase from Mycobacterium smegmatis with positive supercoiling activity.</title>
        <authorList>
            <person name="Jain P."/>
            <person name="Nagaraja V."/>
        </authorList>
    </citation>
    <scope>FUNCTION</scope>
    <scope>REACTION MECHANISM</scope>
    <scope>CATALYTIC ACTIVITY</scope>
    <scope>COFACTOR</scope>
    <scope>ACTIVITY REGULATION</scope>
    <scope>SUBUNIT</scope>
    <source>
        <strain>ATCC 700084 / mc(2)155</strain>
    </source>
</reference>